<gene>
    <name evidence="1" type="primary">upp</name>
    <name type="ordered locus">spyM18_0443</name>
</gene>
<comment type="function">
    <text evidence="1">Catalyzes the conversion of uracil and 5-phospho-alpha-D-ribose 1-diphosphate (PRPP) to UMP and diphosphate.</text>
</comment>
<comment type="catalytic activity">
    <reaction evidence="1">
        <text>UMP + diphosphate = 5-phospho-alpha-D-ribose 1-diphosphate + uracil</text>
        <dbReference type="Rhea" id="RHEA:13017"/>
        <dbReference type="ChEBI" id="CHEBI:17568"/>
        <dbReference type="ChEBI" id="CHEBI:33019"/>
        <dbReference type="ChEBI" id="CHEBI:57865"/>
        <dbReference type="ChEBI" id="CHEBI:58017"/>
        <dbReference type="EC" id="2.4.2.9"/>
    </reaction>
</comment>
<comment type="cofactor">
    <cofactor evidence="1">
        <name>Mg(2+)</name>
        <dbReference type="ChEBI" id="CHEBI:18420"/>
    </cofactor>
    <text evidence="1">Binds 1 Mg(2+) ion per subunit. The magnesium is bound as Mg-PRPP.</text>
</comment>
<comment type="activity regulation">
    <text evidence="1">Allosterically activated by GTP.</text>
</comment>
<comment type="pathway">
    <text evidence="1">Pyrimidine metabolism; UMP biosynthesis via salvage pathway; UMP from uracil: step 1/1.</text>
</comment>
<comment type="similarity">
    <text evidence="1">Belongs to the UPRTase family.</text>
</comment>
<protein>
    <recommendedName>
        <fullName evidence="1">Uracil phosphoribosyltransferase</fullName>
        <ecNumber evidence="1">2.4.2.9</ecNumber>
    </recommendedName>
    <alternativeName>
        <fullName evidence="1">UMP pyrophosphorylase</fullName>
    </alternativeName>
    <alternativeName>
        <fullName evidence="1">UPRTase</fullName>
    </alternativeName>
</protein>
<sequence length="209" mass="22826">MGKCQVISHPLIQHKLSILRRQTTSTKDFRELVNEIAMLMGYEVSRDLPLEDVDIQTPVSKTVQKQLAGKKLAIVPILRAGIGMVDGLLSLVPAAKVGHIGMYRNEETLEPVEYLVKLPEDINQRQIFLVDPMLATGGSAILAVDSLKKRGAANIKFVCLVAAPEGVKKLQEAHPDIDIFTAALDDHLNEHGYIVPGLGDAGDRLFGTK</sequence>
<dbReference type="EC" id="2.4.2.9" evidence="1"/>
<dbReference type="EMBL" id="AE009949">
    <property type="protein sequence ID" value="AAL97180.1"/>
    <property type="molecule type" value="Genomic_DNA"/>
</dbReference>
<dbReference type="RefSeq" id="WP_002985854.1">
    <property type="nucleotide sequence ID" value="NC_003485.1"/>
</dbReference>
<dbReference type="SMR" id="P67402"/>
<dbReference type="GeneID" id="69901341"/>
<dbReference type="KEGG" id="spm:spyM18_0443"/>
<dbReference type="HOGENOM" id="CLU_067096_2_2_9"/>
<dbReference type="UniPathway" id="UPA00574">
    <property type="reaction ID" value="UER00636"/>
</dbReference>
<dbReference type="GO" id="GO:0005525">
    <property type="term" value="F:GTP binding"/>
    <property type="evidence" value="ECO:0007669"/>
    <property type="project" value="UniProtKB-KW"/>
</dbReference>
<dbReference type="GO" id="GO:0000287">
    <property type="term" value="F:magnesium ion binding"/>
    <property type="evidence" value="ECO:0007669"/>
    <property type="project" value="UniProtKB-UniRule"/>
</dbReference>
<dbReference type="GO" id="GO:0004845">
    <property type="term" value="F:uracil phosphoribosyltransferase activity"/>
    <property type="evidence" value="ECO:0007669"/>
    <property type="project" value="UniProtKB-UniRule"/>
</dbReference>
<dbReference type="GO" id="GO:0044206">
    <property type="term" value="P:UMP salvage"/>
    <property type="evidence" value="ECO:0007669"/>
    <property type="project" value="UniProtKB-UniRule"/>
</dbReference>
<dbReference type="GO" id="GO:0006223">
    <property type="term" value="P:uracil salvage"/>
    <property type="evidence" value="ECO:0007669"/>
    <property type="project" value="InterPro"/>
</dbReference>
<dbReference type="CDD" id="cd06223">
    <property type="entry name" value="PRTases_typeI"/>
    <property type="match status" value="1"/>
</dbReference>
<dbReference type="FunFam" id="3.40.50.2020:FF:000003">
    <property type="entry name" value="Uracil phosphoribosyltransferase"/>
    <property type="match status" value="1"/>
</dbReference>
<dbReference type="Gene3D" id="3.40.50.2020">
    <property type="match status" value="1"/>
</dbReference>
<dbReference type="HAMAP" id="MF_01218_B">
    <property type="entry name" value="Upp_B"/>
    <property type="match status" value="1"/>
</dbReference>
<dbReference type="InterPro" id="IPR000836">
    <property type="entry name" value="PRibTrfase_dom"/>
</dbReference>
<dbReference type="InterPro" id="IPR029057">
    <property type="entry name" value="PRTase-like"/>
</dbReference>
<dbReference type="InterPro" id="IPR034332">
    <property type="entry name" value="Upp_B"/>
</dbReference>
<dbReference type="InterPro" id="IPR050054">
    <property type="entry name" value="UPRTase/APRTase"/>
</dbReference>
<dbReference type="InterPro" id="IPR005765">
    <property type="entry name" value="Ura_phspho_trans"/>
</dbReference>
<dbReference type="NCBIfam" id="NF001097">
    <property type="entry name" value="PRK00129.1"/>
    <property type="match status" value="1"/>
</dbReference>
<dbReference type="NCBIfam" id="TIGR01091">
    <property type="entry name" value="upp"/>
    <property type="match status" value="1"/>
</dbReference>
<dbReference type="PANTHER" id="PTHR32315">
    <property type="entry name" value="ADENINE PHOSPHORIBOSYLTRANSFERASE"/>
    <property type="match status" value="1"/>
</dbReference>
<dbReference type="PANTHER" id="PTHR32315:SF4">
    <property type="entry name" value="URACIL PHOSPHORIBOSYLTRANSFERASE, CHLOROPLASTIC"/>
    <property type="match status" value="1"/>
</dbReference>
<dbReference type="Pfam" id="PF14681">
    <property type="entry name" value="UPRTase"/>
    <property type="match status" value="1"/>
</dbReference>
<dbReference type="SUPFAM" id="SSF53271">
    <property type="entry name" value="PRTase-like"/>
    <property type="match status" value="1"/>
</dbReference>
<evidence type="ECO:0000255" key="1">
    <source>
        <dbReference type="HAMAP-Rule" id="MF_01218"/>
    </source>
</evidence>
<proteinExistence type="inferred from homology"/>
<keyword id="KW-0021">Allosteric enzyme</keyword>
<keyword id="KW-0328">Glycosyltransferase</keyword>
<keyword id="KW-0342">GTP-binding</keyword>
<keyword id="KW-0460">Magnesium</keyword>
<keyword id="KW-0547">Nucleotide-binding</keyword>
<keyword id="KW-0808">Transferase</keyword>
<organism>
    <name type="scientific">Streptococcus pyogenes serotype M18 (strain MGAS8232)</name>
    <dbReference type="NCBI Taxonomy" id="186103"/>
    <lineage>
        <taxon>Bacteria</taxon>
        <taxon>Bacillati</taxon>
        <taxon>Bacillota</taxon>
        <taxon>Bacilli</taxon>
        <taxon>Lactobacillales</taxon>
        <taxon>Streptococcaceae</taxon>
        <taxon>Streptococcus</taxon>
    </lineage>
</organism>
<feature type="chain" id="PRO_0000120899" description="Uracil phosphoribosyltransferase">
    <location>
        <begin position="1"/>
        <end position="209"/>
    </location>
</feature>
<feature type="binding site" evidence="1">
    <location>
        <position position="79"/>
    </location>
    <ligand>
        <name>5-phospho-alpha-D-ribose 1-diphosphate</name>
        <dbReference type="ChEBI" id="CHEBI:58017"/>
    </ligand>
</feature>
<feature type="binding site" evidence="1">
    <location>
        <position position="104"/>
    </location>
    <ligand>
        <name>5-phospho-alpha-D-ribose 1-diphosphate</name>
        <dbReference type="ChEBI" id="CHEBI:58017"/>
    </ligand>
</feature>
<feature type="binding site" evidence="1">
    <location>
        <begin position="131"/>
        <end position="139"/>
    </location>
    <ligand>
        <name>5-phospho-alpha-D-ribose 1-diphosphate</name>
        <dbReference type="ChEBI" id="CHEBI:58017"/>
    </ligand>
</feature>
<feature type="binding site" evidence="1">
    <location>
        <position position="194"/>
    </location>
    <ligand>
        <name>uracil</name>
        <dbReference type="ChEBI" id="CHEBI:17568"/>
    </ligand>
</feature>
<feature type="binding site" evidence="1">
    <location>
        <begin position="199"/>
        <end position="201"/>
    </location>
    <ligand>
        <name>uracil</name>
        <dbReference type="ChEBI" id="CHEBI:17568"/>
    </ligand>
</feature>
<feature type="binding site" evidence="1">
    <location>
        <position position="200"/>
    </location>
    <ligand>
        <name>5-phospho-alpha-D-ribose 1-diphosphate</name>
        <dbReference type="ChEBI" id="CHEBI:58017"/>
    </ligand>
</feature>
<name>UPP_STRP8</name>
<reference key="1">
    <citation type="journal article" date="2002" name="Proc. Natl. Acad. Sci. U.S.A.">
        <title>Genome sequence and comparative microarray analysis of serotype M18 group A Streptococcus strains associated with acute rheumatic fever outbreaks.</title>
        <authorList>
            <person name="Smoot J.C."/>
            <person name="Barbian K.D."/>
            <person name="Van Gompel J.J."/>
            <person name="Smoot L.M."/>
            <person name="Chaussee M.S."/>
            <person name="Sylva G.L."/>
            <person name="Sturdevant D.E."/>
            <person name="Ricklefs S.M."/>
            <person name="Porcella S.F."/>
            <person name="Parkins L.D."/>
            <person name="Beres S.B."/>
            <person name="Campbell D.S."/>
            <person name="Smith T.M."/>
            <person name="Zhang Q."/>
            <person name="Kapur V."/>
            <person name="Daly J.A."/>
            <person name="Veasy L.G."/>
            <person name="Musser J.M."/>
        </authorList>
    </citation>
    <scope>NUCLEOTIDE SEQUENCE [LARGE SCALE GENOMIC DNA]</scope>
    <source>
        <strain>MGAS8232</strain>
    </source>
</reference>
<accession>P67402</accession>
<accession>P59000</accession>
<accession>Q9A194</accession>